<sequence length="501" mass="54825">MEQQDPIKKEGRLTPVLALATLIAAFGSSFQYGYNVAAVNSPAELMKAFYNETHYSRFSEYISEFSLTLLWSISVSMFPFGGFVGSLMVGPLVNRLGRKGTLLFNNIFSIVPAILMGTSKTARSYEMIILSRLLVGICAGLSSNVVPMYLGELSPKNLRGALGVVPQLFITVGILVAQIVGLRSLLATEEGWPILLGLTAIPAALQLLLLPFFPESPRYLLIQKKDAAAAKNALKRLRGWDDVDAEMEEIQLEDEAEKAAGIISVLTMFRMRSLRWQVISIIILMGGQQLSGVNAIYYYADQIYLSAGVKDQDVQYVTVGTGAVNVLMTICAVFVVEYLGRRALLLLGFSVCFIACCVLTVALALQDRVSWMPYISIVCVISYVIGHALGPSPIPALLITEVFLQSSRSAAYMVGGTVHWLSNFAVGLVFPFIQVGLGAYSFIIFAVICLLTTIYIFLIVPETKGKTFVEINHIFTKMNKVSDVHPAKDELKDIPLSAVEL</sequence>
<gene>
    <name evidence="1" type="primary">SLC2A5</name>
    <name evidence="5" type="synonym">GLUT5</name>
</gene>
<organism>
    <name type="scientific">Equus caballus</name>
    <name type="common">Horse</name>
    <dbReference type="NCBI Taxonomy" id="9796"/>
    <lineage>
        <taxon>Eukaryota</taxon>
        <taxon>Metazoa</taxon>
        <taxon>Chordata</taxon>
        <taxon>Craniata</taxon>
        <taxon>Vertebrata</taxon>
        <taxon>Euteleostomi</taxon>
        <taxon>Mammalia</taxon>
        <taxon>Eutheria</taxon>
        <taxon>Laurasiatheria</taxon>
        <taxon>Perissodactyla</taxon>
        <taxon>Equidae</taxon>
        <taxon>Equus</taxon>
    </lineage>
</organism>
<reference key="1">
    <citation type="submission" date="2003-04" db="EMBL/GenBank/DDBJ databases">
        <title>Molecular characterisation of fructose transporter (GLUT5) in equine small intestine.</title>
        <authorList>
            <person name="Fernandez-Castano Merediz E."/>
            <person name="Dyer J."/>
            <person name="Salmon K.S.H."/>
            <person name="Shirazi-Beechey S.P."/>
        </authorList>
    </citation>
    <scope>NUCLEOTIDE SEQUENCE [MRNA]</scope>
    <source>
        <tissue>Small intestine</tissue>
    </source>
</reference>
<accession>Q863Y9</accession>
<keyword id="KW-0007">Acetylation</keyword>
<keyword id="KW-1003">Cell membrane</keyword>
<keyword id="KW-0325">Glycoprotein</keyword>
<keyword id="KW-0472">Membrane</keyword>
<keyword id="KW-1185">Reference proteome</keyword>
<keyword id="KW-0762">Sugar transport</keyword>
<keyword id="KW-0812">Transmembrane</keyword>
<keyword id="KW-1133">Transmembrane helix</keyword>
<keyword id="KW-0813">Transport</keyword>
<name>GTR5_HORSE</name>
<dbReference type="EMBL" id="AJ555215">
    <property type="protein sequence ID" value="CAD87604.1"/>
    <property type="molecule type" value="mRNA"/>
</dbReference>
<dbReference type="RefSeq" id="NP_001075346.1">
    <property type="nucleotide sequence ID" value="NM_001081877.1"/>
</dbReference>
<dbReference type="SMR" id="Q863Y9"/>
<dbReference type="FunCoup" id="Q863Y9">
    <property type="interactions" value="277"/>
</dbReference>
<dbReference type="STRING" id="9796.ENSECAP00000027324"/>
<dbReference type="GlyCosmos" id="Q863Y9">
    <property type="glycosylation" value="1 site, No reported glycans"/>
</dbReference>
<dbReference type="PaxDb" id="9796-ENSECAP00000027324"/>
<dbReference type="Ensembl" id="ENSECAT00000058267.2">
    <property type="protein sequence ID" value="ENSECAP00000027200.1"/>
    <property type="gene ID" value="ENSECAG00000022093.4"/>
</dbReference>
<dbReference type="GeneID" id="100033971"/>
<dbReference type="KEGG" id="ecb:100033971"/>
<dbReference type="CTD" id="6518"/>
<dbReference type="VGNC" id="VGNC:50765">
    <property type="gene designation" value="SLC2A5"/>
</dbReference>
<dbReference type="GeneTree" id="ENSGT00940000156846"/>
<dbReference type="HOGENOM" id="CLU_001265_30_5_1"/>
<dbReference type="InParanoid" id="Q863Y9"/>
<dbReference type="OrthoDB" id="4540492at2759"/>
<dbReference type="TreeFam" id="TF313762"/>
<dbReference type="Proteomes" id="UP000002281">
    <property type="component" value="Chromosome 2"/>
</dbReference>
<dbReference type="Bgee" id="ENSECAG00000022093">
    <property type="expression patterns" value="Expressed in chorionic villus and 21 other cell types or tissues"/>
</dbReference>
<dbReference type="ExpressionAtlas" id="Q863Y9">
    <property type="expression patterns" value="baseline"/>
</dbReference>
<dbReference type="GO" id="GO:0016324">
    <property type="term" value="C:apical plasma membrane"/>
    <property type="evidence" value="ECO:0000250"/>
    <property type="project" value="UniProtKB"/>
</dbReference>
<dbReference type="GO" id="GO:0005886">
    <property type="term" value="C:plasma membrane"/>
    <property type="evidence" value="ECO:0000250"/>
    <property type="project" value="UniProtKB"/>
</dbReference>
<dbReference type="GO" id="GO:0042383">
    <property type="term" value="C:sarcolemma"/>
    <property type="evidence" value="ECO:0000250"/>
    <property type="project" value="UniProtKB"/>
</dbReference>
<dbReference type="GO" id="GO:0055056">
    <property type="term" value="F:D-glucose transmembrane transporter activity"/>
    <property type="evidence" value="ECO:0000318"/>
    <property type="project" value="GO_Central"/>
</dbReference>
<dbReference type="GO" id="GO:0070061">
    <property type="term" value="F:fructose binding"/>
    <property type="evidence" value="ECO:0000250"/>
    <property type="project" value="UniProtKB"/>
</dbReference>
<dbReference type="GO" id="GO:0005353">
    <property type="term" value="F:fructose transmembrane transporter activity"/>
    <property type="evidence" value="ECO:0000250"/>
    <property type="project" value="UniProtKB"/>
</dbReference>
<dbReference type="GO" id="GO:0071332">
    <property type="term" value="P:cellular response to fructose stimulus"/>
    <property type="evidence" value="ECO:0000250"/>
    <property type="project" value="UniProtKB"/>
</dbReference>
<dbReference type="GO" id="GO:0046323">
    <property type="term" value="P:D-glucose import"/>
    <property type="evidence" value="ECO:0000318"/>
    <property type="project" value="GO_Central"/>
</dbReference>
<dbReference type="GO" id="GO:0070837">
    <property type="term" value="P:dehydroascorbic acid transport"/>
    <property type="evidence" value="ECO:0000318"/>
    <property type="project" value="GO_Central"/>
</dbReference>
<dbReference type="GO" id="GO:1990539">
    <property type="term" value="P:fructose import across plasma membrane"/>
    <property type="evidence" value="ECO:0000250"/>
    <property type="project" value="UniProtKB"/>
</dbReference>
<dbReference type="GO" id="GO:0015755">
    <property type="term" value="P:fructose transmembrane transport"/>
    <property type="evidence" value="ECO:0000318"/>
    <property type="project" value="GO_Central"/>
</dbReference>
<dbReference type="GO" id="GO:0003044">
    <property type="term" value="P:regulation of systemic arterial blood pressure mediated by a chemical signal"/>
    <property type="evidence" value="ECO:0000250"/>
    <property type="project" value="UniProtKB"/>
</dbReference>
<dbReference type="GO" id="GO:0009750">
    <property type="term" value="P:response to fructose"/>
    <property type="evidence" value="ECO:0000250"/>
    <property type="project" value="UniProtKB"/>
</dbReference>
<dbReference type="CDD" id="cd17432">
    <property type="entry name" value="MFS_GLUT_Class2"/>
    <property type="match status" value="1"/>
</dbReference>
<dbReference type="FunFam" id="1.20.1250.20:FF:001511">
    <property type="entry name" value="Solute carrier family 2, facilitated glucose transporter member 5"/>
    <property type="match status" value="1"/>
</dbReference>
<dbReference type="Gene3D" id="1.20.1250.20">
    <property type="entry name" value="MFS general substrate transporter like domains"/>
    <property type="match status" value="1"/>
</dbReference>
<dbReference type="InterPro" id="IPR002442">
    <property type="entry name" value="Fru_transpt_5"/>
</dbReference>
<dbReference type="InterPro" id="IPR045263">
    <property type="entry name" value="GLUT"/>
</dbReference>
<dbReference type="InterPro" id="IPR020846">
    <property type="entry name" value="MFS_dom"/>
</dbReference>
<dbReference type="InterPro" id="IPR005828">
    <property type="entry name" value="MFS_sugar_transport-like"/>
</dbReference>
<dbReference type="InterPro" id="IPR036259">
    <property type="entry name" value="MFS_trans_sf"/>
</dbReference>
<dbReference type="InterPro" id="IPR003663">
    <property type="entry name" value="Sugar/inositol_transpt"/>
</dbReference>
<dbReference type="InterPro" id="IPR005829">
    <property type="entry name" value="Sugar_transporter_CS"/>
</dbReference>
<dbReference type="NCBIfam" id="TIGR00879">
    <property type="entry name" value="SP"/>
    <property type="match status" value="1"/>
</dbReference>
<dbReference type="PANTHER" id="PTHR23503">
    <property type="entry name" value="SOLUTE CARRIER FAMILY 2"/>
    <property type="match status" value="1"/>
</dbReference>
<dbReference type="PANTHER" id="PTHR23503:SF32">
    <property type="entry name" value="SOLUTE CARRIER FAMILY 2, FACILITATED GLUCOSE TRANSPORTER MEMBER 5"/>
    <property type="match status" value="1"/>
</dbReference>
<dbReference type="Pfam" id="PF00083">
    <property type="entry name" value="Sugar_tr"/>
    <property type="match status" value="1"/>
</dbReference>
<dbReference type="PRINTS" id="PR01194">
    <property type="entry name" value="GLUCTRSPORT5"/>
</dbReference>
<dbReference type="PRINTS" id="PR00171">
    <property type="entry name" value="SUGRTRNSPORT"/>
</dbReference>
<dbReference type="SUPFAM" id="SSF103473">
    <property type="entry name" value="MFS general substrate transporter"/>
    <property type="match status" value="1"/>
</dbReference>
<dbReference type="PROSITE" id="PS50850">
    <property type="entry name" value="MFS"/>
    <property type="match status" value="1"/>
</dbReference>
<dbReference type="PROSITE" id="PS00216">
    <property type="entry name" value="SUGAR_TRANSPORT_1"/>
    <property type="match status" value="1"/>
</dbReference>
<dbReference type="PROSITE" id="PS00217">
    <property type="entry name" value="SUGAR_TRANSPORT_2"/>
    <property type="match status" value="1"/>
</dbReference>
<proteinExistence type="evidence at transcript level"/>
<comment type="function">
    <text evidence="2 3">Functions as a fructose transporter that has only low activity with other monosaccharides. Can mediate the uptake of deoxyglucose, but with low efficiency. Essential for fructose uptake in the small intestine. Plays a role in the regulation of salt uptake and blood pressure in response to dietary fructose. Required for the development of high blood pressure in response to high dietary fructose intake.</text>
</comment>
<comment type="catalytic activity">
    <reaction evidence="1">
        <text>D-fructose(out) = D-fructose(in)</text>
        <dbReference type="Rhea" id="RHEA:60372"/>
        <dbReference type="ChEBI" id="CHEBI:37721"/>
    </reaction>
</comment>
<comment type="subcellular location">
    <subcellularLocation>
        <location evidence="3">Apical cell membrane</location>
        <topology evidence="3">Multi-pass membrane protein</topology>
    </subcellularLocation>
    <subcellularLocation>
        <location evidence="3">Cell membrane</location>
        <topology evidence="3">Multi-pass membrane protein</topology>
    </subcellularLocation>
    <subcellularLocation>
        <location evidence="2">Cell membrane</location>
        <location evidence="2">Sarcolemma</location>
    </subcellularLocation>
    <text evidence="3">Localized on the apical membrane of jejunum villi, but also on lateral plasma membranes of the villi. Transport to the cell membrane is dependent on RAB11A.</text>
</comment>
<comment type="similarity">
    <text evidence="6">Belongs to the major facilitator superfamily. Sugar transporter (TC 2.A.1.1) family. Glucose transporter subfamily.</text>
</comment>
<feature type="chain" id="PRO_0000050368" description="Solute carrier family 2, facilitated glucose transporter member 5">
    <location>
        <begin position="1"/>
        <end position="501"/>
    </location>
</feature>
<feature type="topological domain" description="Cytoplasmic" evidence="2">
    <location>
        <begin position="1"/>
        <end position="18"/>
    </location>
</feature>
<feature type="transmembrane region" description="Helical; Name=1" evidence="2">
    <location>
        <begin position="19"/>
        <end position="39"/>
    </location>
</feature>
<feature type="topological domain" description="Extracellular" evidence="2">
    <location>
        <begin position="40"/>
        <end position="68"/>
    </location>
</feature>
<feature type="transmembrane region" description="Helical; Name=2" evidence="2">
    <location>
        <begin position="69"/>
        <end position="91"/>
    </location>
</feature>
<feature type="topological domain" description="Cytoplasmic" evidence="2">
    <location>
        <begin position="92"/>
        <end position="98"/>
    </location>
</feature>
<feature type="transmembrane region" description="Helical; Name=3" evidence="2">
    <location>
        <begin position="99"/>
        <end position="119"/>
    </location>
</feature>
<feature type="topological domain" description="Extracellular" evidence="2">
    <location>
        <begin position="120"/>
        <end position="126"/>
    </location>
</feature>
<feature type="transmembrane region" description="Helical; Name=4" evidence="2">
    <location>
        <begin position="127"/>
        <end position="149"/>
    </location>
</feature>
<feature type="topological domain" description="Cytoplasmic" evidence="2">
    <location>
        <begin position="150"/>
        <end position="161"/>
    </location>
</feature>
<feature type="transmembrane region" description="Helical; Name=5" evidence="2">
    <location>
        <begin position="162"/>
        <end position="182"/>
    </location>
</feature>
<feature type="topological domain" description="Extracellular" evidence="2">
    <location>
        <begin position="183"/>
        <end position="192"/>
    </location>
</feature>
<feature type="transmembrane region" description="Helical; Name=6" evidence="2">
    <location>
        <begin position="193"/>
        <end position="213"/>
    </location>
</feature>
<feature type="topological domain" description="Cytoplasmic" evidence="2">
    <location>
        <begin position="214"/>
        <end position="277"/>
    </location>
</feature>
<feature type="transmembrane region" description="Helical; Name=7" evidence="2">
    <location>
        <begin position="278"/>
        <end position="298"/>
    </location>
</feature>
<feature type="topological domain" description="Extracellular" evidence="2">
    <location>
        <begin position="299"/>
        <end position="313"/>
    </location>
</feature>
<feature type="transmembrane region" description="Helical; Name=8" evidence="2">
    <location>
        <begin position="314"/>
        <end position="334"/>
    </location>
</feature>
<feature type="topological domain" description="Cytoplasmic" evidence="2">
    <location>
        <begin position="335"/>
        <end position="342"/>
    </location>
</feature>
<feature type="transmembrane region" description="Helical; Name=9" evidence="2">
    <location>
        <begin position="343"/>
        <end position="363"/>
    </location>
</feature>
<feature type="topological domain" description="Extracellular" evidence="2">
    <location>
        <begin position="364"/>
        <end position="371"/>
    </location>
</feature>
<feature type="transmembrane region" description="Helical; Name=10" evidence="2">
    <location>
        <begin position="372"/>
        <end position="394"/>
    </location>
</feature>
<feature type="topological domain" description="Cytoplasmic" evidence="2">
    <location>
        <begin position="395"/>
        <end position="412"/>
    </location>
</feature>
<feature type="transmembrane region" description="Helical; Name=11" evidence="2">
    <location>
        <begin position="413"/>
        <end position="433"/>
    </location>
</feature>
<feature type="topological domain" description="Extracellular" evidence="2">
    <location>
        <begin position="434"/>
        <end position="439"/>
    </location>
</feature>
<feature type="transmembrane region" description="Helical; Name=12" evidence="2">
    <location>
        <begin position="440"/>
        <end position="460"/>
    </location>
</feature>
<feature type="topological domain" description="Cytoplasmic" evidence="2">
    <location>
        <begin position="461"/>
        <end position="501"/>
    </location>
</feature>
<feature type="binding site" evidence="2">
    <location>
        <position position="32"/>
    </location>
    <ligand>
        <name>D-fructose</name>
        <dbReference type="ChEBI" id="CHEBI:37721"/>
    </ligand>
</feature>
<feature type="binding site" evidence="2">
    <location>
        <position position="167"/>
    </location>
    <ligand>
        <name>D-fructose</name>
        <dbReference type="ChEBI" id="CHEBI:37721"/>
    </ligand>
</feature>
<feature type="binding site" evidence="2">
    <location>
        <position position="288"/>
    </location>
    <ligand>
        <name>D-fructose</name>
        <dbReference type="ChEBI" id="CHEBI:37721"/>
    </ligand>
</feature>
<feature type="binding site" evidence="2">
    <location>
        <begin position="296"/>
        <end position="298"/>
    </location>
    <ligand>
        <name>D-fructose</name>
        <dbReference type="ChEBI" id="CHEBI:37721"/>
    </ligand>
</feature>
<feature type="binding site" evidence="2">
    <location>
        <position position="387"/>
    </location>
    <ligand>
        <name>D-fructose</name>
        <dbReference type="ChEBI" id="CHEBI:37721"/>
    </ligand>
</feature>
<feature type="binding site" evidence="2">
    <location>
        <begin position="419"/>
        <end position="420"/>
    </location>
    <ligand>
        <name>D-fructose</name>
        <dbReference type="ChEBI" id="CHEBI:37721"/>
    </ligand>
</feature>
<feature type="modified residue" description="N-acetylmethionine" evidence="1">
    <location>
        <position position="1"/>
    </location>
</feature>
<feature type="glycosylation site" description="N-linked (GlcNAc...) asparagine" evidence="4">
    <location>
        <position position="51"/>
    </location>
</feature>
<protein>
    <recommendedName>
        <fullName evidence="6">Solute carrier family 2, facilitated glucose transporter member 5</fullName>
    </recommendedName>
    <alternativeName>
        <fullName evidence="6">Fructose transporter</fullName>
    </alternativeName>
    <alternativeName>
        <fullName evidence="5">Glucose transporter type 5, small intestine</fullName>
        <shortName evidence="5">GLUT-5</shortName>
    </alternativeName>
</protein>
<evidence type="ECO:0000250" key="1">
    <source>
        <dbReference type="UniProtKB" id="P22732"/>
    </source>
</evidence>
<evidence type="ECO:0000250" key="2">
    <source>
        <dbReference type="UniProtKB" id="P43427"/>
    </source>
</evidence>
<evidence type="ECO:0000250" key="3">
    <source>
        <dbReference type="UniProtKB" id="Q9WV38"/>
    </source>
</evidence>
<evidence type="ECO:0000255" key="4"/>
<evidence type="ECO:0000303" key="5">
    <source ref="1"/>
</evidence>
<evidence type="ECO:0000305" key="6"/>